<organism>
    <name type="scientific">Mycobacterium sp. (strain JLS)</name>
    <dbReference type="NCBI Taxonomy" id="164757"/>
    <lineage>
        <taxon>Bacteria</taxon>
        <taxon>Bacillati</taxon>
        <taxon>Actinomycetota</taxon>
        <taxon>Actinomycetes</taxon>
        <taxon>Mycobacteriales</taxon>
        <taxon>Mycobacteriaceae</taxon>
        <taxon>Mycobacterium</taxon>
    </lineage>
</organism>
<reference key="1">
    <citation type="submission" date="2007-02" db="EMBL/GenBank/DDBJ databases">
        <title>Complete sequence of Mycobacterium sp. JLS.</title>
        <authorList>
            <consortium name="US DOE Joint Genome Institute"/>
            <person name="Copeland A."/>
            <person name="Lucas S."/>
            <person name="Lapidus A."/>
            <person name="Barry K."/>
            <person name="Detter J.C."/>
            <person name="Glavina del Rio T."/>
            <person name="Hammon N."/>
            <person name="Israni S."/>
            <person name="Dalin E."/>
            <person name="Tice H."/>
            <person name="Pitluck S."/>
            <person name="Chain P."/>
            <person name="Malfatti S."/>
            <person name="Shin M."/>
            <person name="Vergez L."/>
            <person name="Schmutz J."/>
            <person name="Larimer F."/>
            <person name="Land M."/>
            <person name="Hauser L."/>
            <person name="Kyrpides N."/>
            <person name="Mikhailova N."/>
            <person name="Miller C.D."/>
            <person name="Anderson A.J."/>
            <person name="Sims R.C."/>
            <person name="Richardson P."/>
        </authorList>
    </citation>
    <scope>NUCLEOTIDE SEQUENCE [LARGE SCALE GENOMIC DNA]</scope>
    <source>
        <strain>JLS</strain>
    </source>
</reference>
<dbReference type="EC" id="3.4.24.-" evidence="1"/>
<dbReference type="EMBL" id="CP000580">
    <property type="protein sequence ID" value="ABN96577.1"/>
    <property type="molecule type" value="Genomic_DNA"/>
</dbReference>
<dbReference type="KEGG" id="mjl:Mjls_0767"/>
<dbReference type="HOGENOM" id="CLU_042266_3_1_11"/>
<dbReference type="BioCyc" id="MSP164757:G1G8C-774-MONOMER"/>
<dbReference type="GO" id="GO:0005886">
    <property type="term" value="C:plasma membrane"/>
    <property type="evidence" value="ECO:0007669"/>
    <property type="project" value="UniProtKB-SubCell"/>
</dbReference>
<dbReference type="GO" id="GO:0004222">
    <property type="term" value="F:metalloendopeptidase activity"/>
    <property type="evidence" value="ECO:0007669"/>
    <property type="project" value="UniProtKB-UniRule"/>
</dbReference>
<dbReference type="GO" id="GO:0008270">
    <property type="term" value="F:zinc ion binding"/>
    <property type="evidence" value="ECO:0007669"/>
    <property type="project" value="UniProtKB-UniRule"/>
</dbReference>
<dbReference type="GO" id="GO:0006508">
    <property type="term" value="P:proteolysis"/>
    <property type="evidence" value="ECO:0007669"/>
    <property type="project" value="UniProtKB-KW"/>
</dbReference>
<dbReference type="CDD" id="cd07336">
    <property type="entry name" value="M48B_HtpX_like"/>
    <property type="match status" value="1"/>
</dbReference>
<dbReference type="Gene3D" id="3.30.2010.10">
    <property type="entry name" value="Metalloproteases ('zincins'), catalytic domain"/>
    <property type="match status" value="1"/>
</dbReference>
<dbReference type="HAMAP" id="MF_00188">
    <property type="entry name" value="Pept_M48_protease_HtpX"/>
    <property type="match status" value="1"/>
</dbReference>
<dbReference type="InterPro" id="IPR050083">
    <property type="entry name" value="HtpX_protease"/>
</dbReference>
<dbReference type="InterPro" id="IPR022919">
    <property type="entry name" value="Pept_M48_protease_HtpX"/>
</dbReference>
<dbReference type="InterPro" id="IPR001915">
    <property type="entry name" value="Peptidase_M48"/>
</dbReference>
<dbReference type="NCBIfam" id="NF002839">
    <property type="entry name" value="PRK03072.1"/>
    <property type="match status" value="1"/>
</dbReference>
<dbReference type="PANTHER" id="PTHR43221">
    <property type="entry name" value="PROTEASE HTPX"/>
    <property type="match status" value="1"/>
</dbReference>
<dbReference type="PANTHER" id="PTHR43221:SF1">
    <property type="entry name" value="PROTEASE HTPX"/>
    <property type="match status" value="1"/>
</dbReference>
<dbReference type="Pfam" id="PF01435">
    <property type="entry name" value="Peptidase_M48"/>
    <property type="match status" value="1"/>
</dbReference>
<dbReference type="PROSITE" id="PS00142">
    <property type="entry name" value="ZINC_PROTEASE"/>
    <property type="match status" value="1"/>
</dbReference>
<comment type="cofactor">
    <cofactor evidence="1">
        <name>Zn(2+)</name>
        <dbReference type="ChEBI" id="CHEBI:29105"/>
    </cofactor>
    <text evidence="1">Binds 1 zinc ion per subunit.</text>
</comment>
<comment type="subcellular location">
    <subcellularLocation>
        <location evidence="1">Cell membrane</location>
        <topology evidence="1">Multi-pass membrane protein</topology>
    </subcellularLocation>
</comment>
<comment type="similarity">
    <text evidence="1">Belongs to the peptidase M48B family.</text>
</comment>
<name>HTPX_MYCSJ</name>
<evidence type="ECO:0000255" key="1">
    <source>
        <dbReference type="HAMAP-Rule" id="MF_00188"/>
    </source>
</evidence>
<keyword id="KW-1003">Cell membrane</keyword>
<keyword id="KW-0378">Hydrolase</keyword>
<keyword id="KW-0472">Membrane</keyword>
<keyword id="KW-0479">Metal-binding</keyword>
<keyword id="KW-0482">Metalloprotease</keyword>
<keyword id="KW-0645">Protease</keyword>
<keyword id="KW-0812">Transmembrane</keyword>
<keyword id="KW-1133">Transmembrane helix</keyword>
<keyword id="KW-0862">Zinc</keyword>
<sequence length="291" mass="31372">MTWNPHANRFKTFLLLVGMSALIVFVGSLFGRSIMALAVLFAVGMNVYVYFNSDKLALKAMHAQPVSELQAPVMYRIVRELSNAAHQPMPRLYISDTANPNAFATGRNPRNSAVCCTTGILQILNERELRAVLGHELSHVYNRDILISCVAGAMASVITALANIALFAGMFGGNREGTNPFALLLVSFLGPIAATVVRLAVSRSREYQADQSGAELTGDPLALASALRKISGGVEAAPLPPQPQLADQAHLMIASPFRSGEKIGKLFSTHPPMADRIRRLEEMAGRGPGLY</sequence>
<protein>
    <recommendedName>
        <fullName evidence="1">Protease HtpX homolog</fullName>
        <ecNumber evidence="1">3.4.24.-</ecNumber>
    </recommendedName>
</protein>
<feature type="chain" id="PRO_1000020890" description="Protease HtpX homolog">
    <location>
        <begin position="1"/>
        <end position="291"/>
    </location>
</feature>
<feature type="transmembrane region" description="Helical" evidence="1">
    <location>
        <begin position="10"/>
        <end position="30"/>
    </location>
</feature>
<feature type="transmembrane region" description="Helical" evidence="1">
    <location>
        <begin position="33"/>
        <end position="53"/>
    </location>
</feature>
<feature type="transmembrane region" description="Helical" evidence="1">
    <location>
        <begin position="151"/>
        <end position="171"/>
    </location>
</feature>
<feature type="transmembrane region" description="Helical" evidence="1">
    <location>
        <begin position="181"/>
        <end position="201"/>
    </location>
</feature>
<feature type="active site" evidence="1">
    <location>
        <position position="136"/>
    </location>
</feature>
<feature type="binding site" evidence="1">
    <location>
        <position position="135"/>
    </location>
    <ligand>
        <name>Zn(2+)</name>
        <dbReference type="ChEBI" id="CHEBI:29105"/>
        <note>catalytic</note>
    </ligand>
</feature>
<feature type="binding site" evidence="1">
    <location>
        <position position="139"/>
    </location>
    <ligand>
        <name>Zn(2+)</name>
        <dbReference type="ChEBI" id="CHEBI:29105"/>
        <note>catalytic</note>
    </ligand>
</feature>
<feature type="binding site" evidence="1">
    <location>
        <position position="206"/>
    </location>
    <ligand>
        <name>Zn(2+)</name>
        <dbReference type="ChEBI" id="CHEBI:29105"/>
        <note>catalytic</note>
    </ligand>
</feature>
<gene>
    <name evidence="1" type="primary">htpX</name>
    <name type="ordered locus">Mjls_0767</name>
</gene>
<proteinExistence type="inferred from homology"/>
<accession>A3PUK0</accession>